<proteinExistence type="inferred from homology"/>
<sequence>MKQRLLFLGPPGAGKGTQAERLCAAHELMHLSTGDLLRAEVGAKTPLGQEAAAVMNRGELVSDELVLAIVENQLKNQSGGWLLDGFPRTLIQATALEPLLEELKQPIEAVVLLELNDAVLIERLISRGRSDDNESVIRNRLEVYREKTAPLIDHYRQQGLLQTVEAQGSIESIAISIEKSLC</sequence>
<feature type="chain" id="PRO_1000058875" description="Adenylate kinase">
    <location>
        <begin position="1"/>
        <end position="182"/>
    </location>
</feature>
<feature type="region of interest" description="NMP" evidence="1">
    <location>
        <begin position="32"/>
        <end position="61"/>
    </location>
</feature>
<feature type="region of interest" description="LID" evidence="1">
    <location>
        <begin position="126"/>
        <end position="132"/>
    </location>
</feature>
<feature type="binding site" evidence="1">
    <location>
        <begin position="12"/>
        <end position="17"/>
    </location>
    <ligand>
        <name>ATP</name>
        <dbReference type="ChEBI" id="CHEBI:30616"/>
    </ligand>
</feature>
<feature type="binding site" evidence="1">
    <location>
        <position position="33"/>
    </location>
    <ligand>
        <name>AMP</name>
        <dbReference type="ChEBI" id="CHEBI:456215"/>
    </ligand>
</feature>
<feature type="binding site" evidence="1">
    <location>
        <position position="38"/>
    </location>
    <ligand>
        <name>AMP</name>
        <dbReference type="ChEBI" id="CHEBI:456215"/>
    </ligand>
</feature>
<feature type="binding site" evidence="1">
    <location>
        <begin position="59"/>
        <end position="61"/>
    </location>
    <ligand>
        <name>AMP</name>
        <dbReference type="ChEBI" id="CHEBI:456215"/>
    </ligand>
</feature>
<feature type="binding site" evidence="1">
    <location>
        <begin position="85"/>
        <end position="88"/>
    </location>
    <ligand>
        <name>AMP</name>
        <dbReference type="ChEBI" id="CHEBI:456215"/>
    </ligand>
</feature>
<feature type="binding site" evidence="1">
    <location>
        <position position="92"/>
    </location>
    <ligand>
        <name>AMP</name>
        <dbReference type="ChEBI" id="CHEBI:456215"/>
    </ligand>
</feature>
<feature type="binding site" evidence="1">
    <location>
        <position position="127"/>
    </location>
    <ligand>
        <name>ATP</name>
        <dbReference type="ChEBI" id="CHEBI:30616"/>
    </ligand>
</feature>
<feature type="binding site" evidence="1">
    <location>
        <position position="129"/>
    </location>
    <ligand>
        <name>AMP</name>
        <dbReference type="ChEBI" id="CHEBI:456215"/>
    </ligand>
</feature>
<feature type="binding site" evidence="1">
    <location>
        <position position="140"/>
    </location>
    <ligand>
        <name>AMP</name>
        <dbReference type="ChEBI" id="CHEBI:456215"/>
    </ligand>
</feature>
<feature type="binding site" evidence="1">
    <location>
        <position position="168"/>
    </location>
    <ligand>
        <name>ATP</name>
        <dbReference type="ChEBI" id="CHEBI:30616"/>
    </ligand>
</feature>
<accession>A2CC47</accession>
<evidence type="ECO:0000255" key="1">
    <source>
        <dbReference type="HAMAP-Rule" id="MF_00235"/>
    </source>
</evidence>
<name>KAD_PROM3</name>
<gene>
    <name evidence="1" type="primary">adk</name>
    <name type="ordered locus">P9303_23221</name>
</gene>
<organism>
    <name type="scientific">Prochlorococcus marinus (strain MIT 9303)</name>
    <dbReference type="NCBI Taxonomy" id="59922"/>
    <lineage>
        <taxon>Bacteria</taxon>
        <taxon>Bacillati</taxon>
        <taxon>Cyanobacteriota</taxon>
        <taxon>Cyanophyceae</taxon>
        <taxon>Synechococcales</taxon>
        <taxon>Prochlorococcaceae</taxon>
        <taxon>Prochlorococcus</taxon>
    </lineage>
</organism>
<reference key="1">
    <citation type="journal article" date="2007" name="PLoS Genet.">
        <title>Patterns and implications of gene gain and loss in the evolution of Prochlorococcus.</title>
        <authorList>
            <person name="Kettler G.C."/>
            <person name="Martiny A.C."/>
            <person name="Huang K."/>
            <person name="Zucker J."/>
            <person name="Coleman M.L."/>
            <person name="Rodrigue S."/>
            <person name="Chen F."/>
            <person name="Lapidus A."/>
            <person name="Ferriera S."/>
            <person name="Johnson J."/>
            <person name="Steglich C."/>
            <person name="Church G.M."/>
            <person name="Richardson P."/>
            <person name="Chisholm S.W."/>
        </authorList>
    </citation>
    <scope>NUCLEOTIDE SEQUENCE [LARGE SCALE GENOMIC DNA]</scope>
    <source>
        <strain>MIT 9303</strain>
    </source>
</reference>
<dbReference type="EC" id="2.7.4.3" evidence="1"/>
<dbReference type="EMBL" id="CP000554">
    <property type="protein sequence ID" value="ABM79057.1"/>
    <property type="molecule type" value="Genomic_DNA"/>
</dbReference>
<dbReference type="RefSeq" id="WP_011826923.1">
    <property type="nucleotide sequence ID" value="NC_008820.1"/>
</dbReference>
<dbReference type="SMR" id="A2CC47"/>
<dbReference type="STRING" id="59922.P9303_23221"/>
<dbReference type="KEGG" id="pmf:P9303_23221"/>
<dbReference type="HOGENOM" id="CLU_032354_4_1_3"/>
<dbReference type="BioCyc" id="PMAR59922:G1G80-2038-MONOMER"/>
<dbReference type="UniPathway" id="UPA00588">
    <property type="reaction ID" value="UER00649"/>
</dbReference>
<dbReference type="Proteomes" id="UP000002274">
    <property type="component" value="Chromosome"/>
</dbReference>
<dbReference type="GO" id="GO:0005737">
    <property type="term" value="C:cytoplasm"/>
    <property type="evidence" value="ECO:0007669"/>
    <property type="project" value="UniProtKB-SubCell"/>
</dbReference>
<dbReference type="GO" id="GO:0004017">
    <property type="term" value="F:adenylate kinase activity"/>
    <property type="evidence" value="ECO:0007669"/>
    <property type="project" value="UniProtKB-UniRule"/>
</dbReference>
<dbReference type="GO" id="GO:0005524">
    <property type="term" value="F:ATP binding"/>
    <property type="evidence" value="ECO:0007669"/>
    <property type="project" value="UniProtKB-UniRule"/>
</dbReference>
<dbReference type="GO" id="GO:0044209">
    <property type="term" value="P:AMP salvage"/>
    <property type="evidence" value="ECO:0007669"/>
    <property type="project" value="UniProtKB-UniRule"/>
</dbReference>
<dbReference type="CDD" id="cd01428">
    <property type="entry name" value="ADK"/>
    <property type="match status" value="1"/>
</dbReference>
<dbReference type="Gene3D" id="3.40.50.300">
    <property type="entry name" value="P-loop containing nucleotide triphosphate hydrolases"/>
    <property type="match status" value="1"/>
</dbReference>
<dbReference type="HAMAP" id="MF_00235">
    <property type="entry name" value="Adenylate_kinase_Adk"/>
    <property type="match status" value="1"/>
</dbReference>
<dbReference type="InterPro" id="IPR000850">
    <property type="entry name" value="Adenylat/UMP-CMP_kin"/>
</dbReference>
<dbReference type="InterPro" id="IPR033690">
    <property type="entry name" value="Adenylat_kinase_CS"/>
</dbReference>
<dbReference type="InterPro" id="IPR027417">
    <property type="entry name" value="P-loop_NTPase"/>
</dbReference>
<dbReference type="NCBIfam" id="NF001381">
    <property type="entry name" value="PRK00279.1-3"/>
    <property type="match status" value="1"/>
</dbReference>
<dbReference type="NCBIfam" id="NF011100">
    <property type="entry name" value="PRK14527.1"/>
    <property type="match status" value="1"/>
</dbReference>
<dbReference type="NCBIfam" id="NF011104">
    <property type="entry name" value="PRK14531.1"/>
    <property type="match status" value="1"/>
</dbReference>
<dbReference type="NCBIfam" id="NF011105">
    <property type="entry name" value="PRK14532.1"/>
    <property type="match status" value="1"/>
</dbReference>
<dbReference type="PANTHER" id="PTHR23359">
    <property type="entry name" value="NUCLEOTIDE KINASE"/>
    <property type="match status" value="1"/>
</dbReference>
<dbReference type="Pfam" id="PF00406">
    <property type="entry name" value="ADK"/>
    <property type="match status" value="1"/>
</dbReference>
<dbReference type="PRINTS" id="PR00094">
    <property type="entry name" value="ADENYLTKNASE"/>
</dbReference>
<dbReference type="SUPFAM" id="SSF52540">
    <property type="entry name" value="P-loop containing nucleoside triphosphate hydrolases"/>
    <property type="match status" value="1"/>
</dbReference>
<dbReference type="PROSITE" id="PS00113">
    <property type="entry name" value="ADENYLATE_KINASE"/>
    <property type="match status" value="1"/>
</dbReference>
<keyword id="KW-0067">ATP-binding</keyword>
<keyword id="KW-0963">Cytoplasm</keyword>
<keyword id="KW-0418">Kinase</keyword>
<keyword id="KW-0545">Nucleotide biosynthesis</keyword>
<keyword id="KW-0547">Nucleotide-binding</keyword>
<keyword id="KW-0808">Transferase</keyword>
<protein>
    <recommendedName>
        <fullName evidence="1">Adenylate kinase</fullName>
        <shortName evidence="1">AK</shortName>
        <ecNumber evidence="1">2.7.4.3</ecNumber>
    </recommendedName>
    <alternativeName>
        <fullName evidence="1">ATP-AMP transphosphorylase</fullName>
    </alternativeName>
    <alternativeName>
        <fullName evidence="1">ATP:AMP phosphotransferase</fullName>
    </alternativeName>
    <alternativeName>
        <fullName evidence="1">Adenylate monophosphate kinase</fullName>
    </alternativeName>
</protein>
<comment type="function">
    <text evidence="1">Catalyzes the reversible transfer of the terminal phosphate group between ATP and AMP. Plays an important role in cellular energy homeostasis and in adenine nucleotide metabolism.</text>
</comment>
<comment type="catalytic activity">
    <reaction evidence="1">
        <text>AMP + ATP = 2 ADP</text>
        <dbReference type="Rhea" id="RHEA:12973"/>
        <dbReference type="ChEBI" id="CHEBI:30616"/>
        <dbReference type="ChEBI" id="CHEBI:456215"/>
        <dbReference type="ChEBI" id="CHEBI:456216"/>
        <dbReference type="EC" id="2.7.4.3"/>
    </reaction>
</comment>
<comment type="pathway">
    <text evidence="1">Purine metabolism; AMP biosynthesis via salvage pathway; AMP from ADP: step 1/1.</text>
</comment>
<comment type="subunit">
    <text evidence="1">Monomer.</text>
</comment>
<comment type="subcellular location">
    <subcellularLocation>
        <location evidence="1">Cytoplasm</location>
    </subcellularLocation>
</comment>
<comment type="domain">
    <text evidence="1">Consists of three domains, a large central CORE domain and two small peripheral domains, NMPbind and LID, which undergo movements during catalysis. The LID domain closes over the site of phosphoryl transfer upon ATP binding. Assembling and dissambling the active center during each catalytic cycle provides an effective means to prevent ATP hydrolysis.</text>
</comment>
<comment type="similarity">
    <text evidence="1">Belongs to the adenylate kinase family.</text>
</comment>